<protein>
    <recommendedName>
        <fullName>Vacuolar protein-sorting protein BRO1</fullName>
    </recommendedName>
    <alternativeName>
        <fullName>BRO domain-containing protein 1</fullName>
    </alternativeName>
</protein>
<name>BRO1_KLULA</name>
<dbReference type="EMBL" id="CR382125">
    <property type="protein sequence ID" value="CAH00114.1"/>
    <property type="molecule type" value="Genomic_DNA"/>
</dbReference>
<dbReference type="RefSeq" id="XP_455027.1">
    <property type="nucleotide sequence ID" value="XM_455027.1"/>
</dbReference>
<dbReference type="SMR" id="Q6CM12"/>
<dbReference type="FunCoup" id="Q6CM12">
    <property type="interactions" value="104"/>
</dbReference>
<dbReference type="STRING" id="284590.Q6CM12"/>
<dbReference type="PaxDb" id="284590-Q6CM12"/>
<dbReference type="KEGG" id="kla:KLLA0_E23871g"/>
<dbReference type="eggNOG" id="KOG2220">
    <property type="taxonomic scope" value="Eukaryota"/>
</dbReference>
<dbReference type="HOGENOM" id="CLU_321635_0_0_1"/>
<dbReference type="InParanoid" id="Q6CM12"/>
<dbReference type="OMA" id="YLKRSYG"/>
<dbReference type="Proteomes" id="UP000000598">
    <property type="component" value="Chromosome E"/>
</dbReference>
<dbReference type="GO" id="GO:0005768">
    <property type="term" value="C:endosome"/>
    <property type="evidence" value="ECO:0007669"/>
    <property type="project" value="UniProtKB-SubCell"/>
</dbReference>
<dbReference type="GO" id="GO:0043328">
    <property type="term" value="P:protein transport to vacuole involved in ubiquitin-dependent protein catabolic process via the multivesicular body sorting pathway"/>
    <property type="evidence" value="ECO:0007669"/>
    <property type="project" value="TreeGrafter"/>
</dbReference>
<dbReference type="CDD" id="cd09242">
    <property type="entry name" value="BRO1_ScBro1_like"/>
    <property type="match status" value="1"/>
</dbReference>
<dbReference type="CDD" id="cd09237">
    <property type="entry name" value="V_ScBro1_like"/>
    <property type="match status" value="1"/>
</dbReference>
<dbReference type="Gene3D" id="1.20.120.560">
    <property type="entry name" value="alix/aip1 in complex with the ypdl late domain"/>
    <property type="match status" value="1"/>
</dbReference>
<dbReference type="Gene3D" id="1.20.140.50">
    <property type="entry name" value="alix/aip1 like domains"/>
    <property type="match status" value="1"/>
</dbReference>
<dbReference type="Gene3D" id="1.25.40.280">
    <property type="entry name" value="alix/aip1 like domains"/>
    <property type="match status" value="1"/>
</dbReference>
<dbReference type="InterPro" id="IPR025304">
    <property type="entry name" value="ALIX_V_dom"/>
</dbReference>
<dbReference type="InterPro" id="IPR004328">
    <property type="entry name" value="BRO1_dom"/>
</dbReference>
<dbReference type="InterPro" id="IPR038499">
    <property type="entry name" value="BRO1_sf"/>
</dbReference>
<dbReference type="PANTHER" id="PTHR23030">
    <property type="entry name" value="PCD6 INTERACTING PROTEIN-RELATED"/>
    <property type="match status" value="1"/>
</dbReference>
<dbReference type="PANTHER" id="PTHR23030:SF30">
    <property type="entry name" value="TYROSINE-PROTEIN PHOSPHATASE NON-RECEPTOR TYPE 23"/>
    <property type="match status" value="1"/>
</dbReference>
<dbReference type="Pfam" id="PF13949">
    <property type="entry name" value="ALIX_LYPXL_bnd"/>
    <property type="match status" value="1"/>
</dbReference>
<dbReference type="Pfam" id="PF03097">
    <property type="entry name" value="BRO1"/>
    <property type="match status" value="1"/>
</dbReference>
<dbReference type="SMART" id="SM01041">
    <property type="entry name" value="BRO1"/>
    <property type="match status" value="1"/>
</dbReference>
<dbReference type="PROSITE" id="PS51180">
    <property type="entry name" value="BRO1"/>
    <property type="match status" value="1"/>
</dbReference>
<sequence>MKTVLLPLKIKDTESISWTKGLITYLKRSYGSSQWSVFYDGDKTAEIDSCRTTANSDLAPESLLDQNYKYAAILEQIYLRLGAHSGSLQMDFTWYEAEYHSRLSEKKFKQHTVVFEKSSVMYNIGVLLSQIAKKKMSDNYKSAIPYLSKAMACFDYMSNNFLNSPSIDCAAENTSFLSTLLHAEAQEMFLMTLINGPDASKRASLISKLAHTALNLYEKCQEFYEDSSTATFGTTPYGEDKWKDIITLKVHLYRAISTYNHLRVLEEAKKIGEAIAYGKLAVHEIKEAGFYKVYVKDEIDLTGLKAVIEEKLKSLIKDNDFIYNDLIPADVSIESIKTMDAVKPVTWEEQLKVYLEQVVDLCNGAFKGIVPMEVYENESIYSEEKASLLRKEVEETDTADWEYQSFIEFTDLPKLIKDLESRYVHGGNGSSDDPQYEIMKQKITTWSKVVQDSNFKDVRAQMQNILDKRNEILTILSSVSPDQRENALKIKNSLVQASQSDDKIFASINPCLEEVNLLANHQLLWSIMSKFQIRNDEPSLLDLDDSKNQQILDRLHNIKHNQEILRLLKEERTRNLKDFKESLNNDDITQKLILLTGKPKKEMRVIFEEELTKFKPLSTRIEATIFKQNNLINDIKIKLDEVFKLIGVQDKTPEQENTVKERQTFFDKVEKAFNQFVIFSTDLPKGLNFYDTLLKMTRELSHASTPGQSVNLIDSNTLPPNLPQKSTQSTTLTKSFANLNLCNDVNDSVTQSPANLANTNNTGVNPGPPQLPPKPLSTGISGLVSDQKLQNGPTSFYNNPSVFDENLYSKFSK</sequence>
<keyword id="KW-0175">Coiled coil</keyword>
<keyword id="KW-0963">Cytoplasm</keyword>
<keyword id="KW-0967">Endosome</keyword>
<keyword id="KW-0653">Protein transport</keyword>
<keyword id="KW-1185">Reference proteome</keyword>
<keyword id="KW-0813">Transport</keyword>
<gene>
    <name type="primary">BRO1</name>
    <name type="ordered locus">KLLA0E23914g</name>
</gene>
<proteinExistence type="inferred from homology"/>
<accession>Q6CM12</accession>
<evidence type="ECO:0000250" key="1"/>
<evidence type="ECO:0000255" key="2">
    <source>
        <dbReference type="PROSITE-ProRule" id="PRU00526"/>
    </source>
</evidence>
<evidence type="ECO:0000256" key="3">
    <source>
        <dbReference type="SAM" id="MobiDB-lite"/>
    </source>
</evidence>
<evidence type="ECO:0000305" key="4"/>
<reference key="1">
    <citation type="journal article" date="2004" name="Nature">
        <title>Genome evolution in yeasts.</title>
        <authorList>
            <person name="Dujon B."/>
            <person name="Sherman D."/>
            <person name="Fischer G."/>
            <person name="Durrens P."/>
            <person name="Casaregola S."/>
            <person name="Lafontaine I."/>
            <person name="de Montigny J."/>
            <person name="Marck C."/>
            <person name="Neuveglise C."/>
            <person name="Talla E."/>
            <person name="Goffard N."/>
            <person name="Frangeul L."/>
            <person name="Aigle M."/>
            <person name="Anthouard V."/>
            <person name="Babour A."/>
            <person name="Barbe V."/>
            <person name="Barnay S."/>
            <person name="Blanchin S."/>
            <person name="Beckerich J.-M."/>
            <person name="Beyne E."/>
            <person name="Bleykasten C."/>
            <person name="Boisrame A."/>
            <person name="Boyer J."/>
            <person name="Cattolico L."/>
            <person name="Confanioleri F."/>
            <person name="de Daruvar A."/>
            <person name="Despons L."/>
            <person name="Fabre E."/>
            <person name="Fairhead C."/>
            <person name="Ferry-Dumazet H."/>
            <person name="Groppi A."/>
            <person name="Hantraye F."/>
            <person name="Hennequin C."/>
            <person name="Jauniaux N."/>
            <person name="Joyet P."/>
            <person name="Kachouri R."/>
            <person name="Kerrest A."/>
            <person name="Koszul R."/>
            <person name="Lemaire M."/>
            <person name="Lesur I."/>
            <person name="Ma L."/>
            <person name="Muller H."/>
            <person name="Nicaud J.-M."/>
            <person name="Nikolski M."/>
            <person name="Oztas S."/>
            <person name="Ozier-Kalogeropoulos O."/>
            <person name="Pellenz S."/>
            <person name="Potier S."/>
            <person name="Richard G.-F."/>
            <person name="Straub M.-L."/>
            <person name="Suleau A."/>
            <person name="Swennen D."/>
            <person name="Tekaia F."/>
            <person name="Wesolowski-Louvel M."/>
            <person name="Westhof E."/>
            <person name="Wirth B."/>
            <person name="Zeniou-Meyer M."/>
            <person name="Zivanovic Y."/>
            <person name="Bolotin-Fukuhara M."/>
            <person name="Thierry A."/>
            <person name="Bouchier C."/>
            <person name="Caudron B."/>
            <person name="Scarpelli C."/>
            <person name="Gaillardin C."/>
            <person name="Weissenbach J."/>
            <person name="Wincker P."/>
            <person name="Souciet J.-L."/>
        </authorList>
    </citation>
    <scope>NUCLEOTIDE SEQUENCE [LARGE SCALE GENOMIC DNA]</scope>
    <source>
        <strain>ATCC 8585 / CBS 2359 / DSM 70799 / NBRC 1267 / NRRL Y-1140 / WM37</strain>
    </source>
</reference>
<comment type="function">
    <text evidence="1">Involved in concentration and sorting of cargo proteins of the multivesicular body (MVB) for incorporation into intralumenal vesicles.</text>
</comment>
<comment type="subcellular location">
    <subcellularLocation>
        <location evidence="1">Cytoplasm</location>
    </subcellularLocation>
    <subcellularLocation>
        <location evidence="1">Endosome</location>
    </subcellularLocation>
</comment>
<comment type="similarity">
    <text evidence="4">Belongs to the BRO1 family.</text>
</comment>
<organism>
    <name type="scientific">Kluyveromyces lactis (strain ATCC 8585 / CBS 2359 / DSM 70799 / NBRC 1267 / NRRL Y-1140 / WM37)</name>
    <name type="common">Yeast</name>
    <name type="synonym">Candida sphaerica</name>
    <dbReference type="NCBI Taxonomy" id="284590"/>
    <lineage>
        <taxon>Eukaryota</taxon>
        <taxon>Fungi</taxon>
        <taxon>Dikarya</taxon>
        <taxon>Ascomycota</taxon>
        <taxon>Saccharomycotina</taxon>
        <taxon>Saccharomycetes</taxon>
        <taxon>Saccharomycetales</taxon>
        <taxon>Saccharomycetaceae</taxon>
        <taxon>Kluyveromyces</taxon>
    </lineage>
</organism>
<feature type="chain" id="PRO_0000218867" description="Vacuolar protein-sorting protein BRO1">
    <location>
        <begin position="1"/>
        <end position="813"/>
    </location>
</feature>
<feature type="domain" description="BRO1" evidence="2">
    <location>
        <begin position="4"/>
        <end position="403"/>
    </location>
</feature>
<feature type="region of interest" description="Disordered" evidence="3">
    <location>
        <begin position="704"/>
        <end position="729"/>
    </location>
</feature>
<feature type="region of interest" description="Disordered" evidence="3">
    <location>
        <begin position="752"/>
        <end position="781"/>
    </location>
</feature>
<feature type="compositionally biased region" description="Polar residues" evidence="3">
    <location>
        <begin position="704"/>
        <end position="719"/>
    </location>
</feature>
<feature type="compositionally biased region" description="Pro residues" evidence="3">
    <location>
        <begin position="766"/>
        <end position="775"/>
    </location>
</feature>